<evidence type="ECO:0000255" key="1">
    <source>
        <dbReference type="HAMAP-Rule" id="MF_00005"/>
    </source>
</evidence>
<proteinExistence type="inferred from homology"/>
<keyword id="KW-0028">Amino-acid biosynthesis</keyword>
<keyword id="KW-0055">Arginine biosynthesis</keyword>
<keyword id="KW-0067">ATP-binding</keyword>
<keyword id="KW-0963">Cytoplasm</keyword>
<keyword id="KW-0436">Ligase</keyword>
<keyword id="KW-0547">Nucleotide-binding</keyword>
<gene>
    <name evidence="1" type="primary">argG</name>
    <name type="ordered locus">SAB0829c</name>
</gene>
<accession>Q2YWS4</accession>
<dbReference type="EC" id="6.3.4.5" evidence="1"/>
<dbReference type="EMBL" id="AJ938182">
    <property type="protein sequence ID" value="CAI80517.1"/>
    <property type="molecule type" value="Genomic_DNA"/>
</dbReference>
<dbReference type="RefSeq" id="WP_000660055.1">
    <property type="nucleotide sequence ID" value="NC_007622.1"/>
</dbReference>
<dbReference type="SMR" id="Q2YWS4"/>
<dbReference type="KEGG" id="sab:SAB0829c"/>
<dbReference type="HOGENOM" id="CLU_032784_4_2_9"/>
<dbReference type="UniPathway" id="UPA00068">
    <property type="reaction ID" value="UER00113"/>
</dbReference>
<dbReference type="GO" id="GO:0005737">
    <property type="term" value="C:cytoplasm"/>
    <property type="evidence" value="ECO:0007669"/>
    <property type="project" value="UniProtKB-SubCell"/>
</dbReference>
<dbReference type="GO" id="GO:0004055">
    <property type="term" value="F:argininosuccinate synthase activity"/>
    <property type="evidence" value="ECO:0007669"/>
    <property type="project" value="UniProtKB-UniRule"/>
</dbReference>
<dbReference type="GO" id="GO:0005524">
    <property type="term" value="F:ATP binding"/>
    <property type="evidence" value="ECO:0007669"/>
    <property type="project" value="UniProtKB-UniRule"/>
</dbReference>
<dbReference type="GO" id="GO:0000053">
    <property type="term" value="P:argininosuccinate metabolic process"/>
    <property type="evidence" value="ECO:0007669"/>
    <property type="project" value="TreeGrafter"/>
</dbReference>
<dbReference type="GO" id="GO:0006526">
    <property type="term" value="P:L-arginine biosynthetic process"/>
    <property type="evidence" value="ECO:0007669"/>
    <property type="project" value="UniProtKB-UniRule"/>
</dbReference>
<dbReference type="GO" id="GO:0000050">
    <property type="term" value="P:urea cycle"/>
    <property type="evidence" value="ECO:0007669"/>
    <property type="project" value="TreeGrafter"/>
</dbReference>
<dbReference type="CDD" id="cd01999">
    <property type="entry name" value="ASS"/>
    <property type="match status" value="1"/>
</dbReference>
<dbReference type="FunFam" id="1.20.5.470:FF:000002">
    <property type="entry name" value="Argininosuccinate synthase"/>
    <property type="match status" value="1"/>
</dbReference>
<dbReference type="FunFam" id="3.40.50.620:FF:000038">
    <property type="entry name" value="Argininosuccinate synthase"/>
    <property type="match status" value="1"/>
</dbReference>
<dbReference type="FunFam" id="3.90.1260.10:FF:000007">
    <property type="entry name" value="Argininosuccinate synthase"/>
    <property type="match status" value="1"/>
</dbReference>
<dbReference type="Gene3D" id="3.90.1260.10">
    <property type="entry name" value="Argininosuccinate synthetase, chain A, domain 2"/>
    <property type="match status" value="1"/>
</dbReference>
<dbReference type="Gene3D" id="3.40.50.620">
    <property type="entry name" value="HUPs"/>
    <property type="match status" value="1"/>
</dbReference>
<dbReference type="Gene3D" id="1.20.5.470">
    <property type="entry name" value="Single helix bin"/>
    <property type="match status" value="1"/>
</dbReference>
<dbReference type="HAMAP" id="MF_00005">
    <property type="entry name" value="Arg_succ_synth_type1"/>
    <property type="match status" value="1"/>
</dbReference>
<dbReference type="InterPro" id="IPR048268">
    <property type="entry name" value="Arginosuc_syn_C"/>
</dbReference>
<dbReference type="InterPro" id="IPR048267">
    <property type="entry name" value="Arginosuc_syn_N"/>
</dbReference>
<dbReference type="InterPro" id="IPR001518">
    <property type="entry name" value="Arginosuc_synth"/>
</dbReference>
<dbReference type="InterPro" id="IPR018223">
    <property type="entry name" value="Arginosuc_synth_CS"/>
</dbReference>
<dbReference type="InterPro" id="IPR023434">
    <property type="entry name" value="Arginosuc_synth_type_1_subfam"/>
</dbReference>
<dbReference type="InterPro" id="IPR024074">
    <property type="entry name" value="AS_cat/multimer_dom_body"/>
</dbReference>
<dbReference type="InterPro" id="IPR014729">
    <property type="entry name" value="Rossmann-like_a/b/a_fold"/>
</dbReference>
<dbReference type="NCBIfam" id="TIGR00032">
    <property type="entry name" value="argG"/>
    <property type="match status" value="1"/>
</dbReference>
<dbReference type="NCBIfam" id="NF001770">
    <property type="entry name" value="PRK00509.1"/>
    <property type="match status" value="1"/>
</dbReference>
<dbReference type="PANTHER" id="PTHR11587">
    <property type="entry name" value="ARGININOSUCCINATE SYNTHASE"/>
    <property type="match status" value="1"/>
</dbReference>
<dbReference type="PANTHER" id="PTHR11587:SF2">
    <property type="entry name" value="ARGININOSUCCINATE SYNTHASE"/>
    <property type="match status" value="1"/>
</dbReference>
<dbReference type="Pfam" id="PF20979">
    <property type="entry name" value="Arginosuc_syn_C"/>
    <property type="match status" value="1"/>
</dbReference>
<dbReference type="Pfam" id="PF00764">
    <property type="entry name" value="Arginosuc_synth"/>
    <property type="match status" value="1"/>
</dbReference>
<dbReference type="SUPFAM" id="SSF52402">
    <property type="entry name" value="Adenine nucleotide alpha hydrolases-like"/>
    <property type="match status" value="1"/>
</dbReference>
<dbReference type="SUPFAM" id="SSF69864">
    <property type="entry name" value="Argininosuccinate synthetase, C-terminal domain"/>
    <property type="match status" value="1"/>
</dbReference>
<dbReference type="PROSITE" id="PS00564">
    <property type="entry name" value="ARGININOSUCCIN_SYN_1"/>
    <property type="match status" value="1"/>
</dbReference>
<dbReference type="PROSITE" id="PS00565">
    <property type="entry name" value="ARGININOSUCCIN_SYN_2"/>
    <property type="match status" value="1"/>
</dbReference>
<comment type="catalytic activity">
    <reaction evidence="1">
        <text>L-citrulline + L-aspartate + ATP = 2-(N(omega)-L-arginino)succinate + AMP + diphosphate + H(+)</text>
        <dbReference type="Rhea" id="RHEA:10932"/>
        <dbReference type="ChEBI" id="CHEBI:15378"/>
        <dbReference type="ChEBI" id="CHEBI:29991"/>
        <dbReference type="ChEBI" id="CHEBI:30616"/>
        <dbReference type="ChEBI" id="CHEBI:33019"/>
        <dbReference type="ChEBI" id="CHEBI:57472"/>
        <dbReference type="ChEBI" id="CHEBI:57743"/>
        <dbReference type="ChEBI" id="CHEBI:456215"/>
        <dbReference type="EC" id="6.3.4.5"/>
    </reaction>
</comment>
<comment type="pathway">
    <text evidence="1">Amino-acid biosynthesis; L-arginine biosynthesis; L-arginine from L-ornithine and carbamoyl phosphate: step 2/3.</text>
</comment>
<comment type="subunit">
    <text evidence="1">Homotetramer.</text>
</comment>
<comment type="subcellular location">
    <subcellularLocation>
        <location evidence="1">Cytoplasm</location>
    </subcellularLocation>
</comment>
<comment type="similarity">
    <text evidence="1">Belongs to the argininosuccinate synthase family. Type 1 subfamily.</text>
</comment>
<reference key="1">
    <citation type="journal article" date="2007" name="PLoS ONE">
        <title>Molecular correlates of host specialization in Staphylococcus aureus.</title>
        <authorList>
            <person name="Herron-Olson L."/>
            <person name="Fitzgerald J.R."/>
            <person name="Musser J.M."/>
            <person name="Kapur V."/>
        </authorList>
    </citation>
    <scope>NUCLEOTIDE SEQUENCE [LARGE SCALE GENOMIC DNA]</scope>
    <source>
        <strain>bovine RF122 / ET3-1</strain>
    </source>
</reference>
<sequence>MKEKIVLAYSGGLDTSVAVQWLIDKGYDVVACCLDVGEGKDLDIVYKKALDTGAIECHIIDATKEFSDEYVSYAIKGNLMYENAYPLFSALSRPLIAKKLVEIAEKTNSVGIAHGCTGKGNDQVRFEVAIKALNPSLKAFAPVREWAWSREEEIDYAIKHNIPVSINHDSPYSIDQNLWGRANECGILEDPYAAPPEDAFDLTNALEETPDTADEIILTFVKGIPVQIDGKTYELDDLILTLNALAGKHGIGRIDHVENRLVGIKSREIYEAPAAEVILKAHKALETITLTKDVAHFKPIIEKQFAEQLYNGLWFSPLTDSLKLFIDSTQQYVSGDVRIKLFKGNAIVNGRKSPYTLYDEKLATYTKEDAFNQDAAVGFIDIYGLPTQVNAMLNGGYSNEQ</sequence>
<name>ASSY_STAAB</name>
<protein>
    <recommendedName>
        <fullName evidence="1">Argininosuccinate synthase</fullName>
        <ecNumber evidence="1">6.3.4.5</ecNumber>
    </recommendedName>
    <alternativeName>
        <fullName evidence="1">Citrulline--aspartate ligase</fullName>
    </alternativeName>
</protein>
<feature type="chain" id="PRO_0000263975" description="Argininosuccinate synthase">
    <location>
        <begin position="1"/>
        <end position="401"/>
    </location>
</feature>
<feature type="binding site" evidence="1">
    <location>
        <begin position="8"/>
        <end position="16"/>
    </location>
    <ligand>
        <name>ATP</name>
        <dbReference type="ChEBI" id="CHEBI:30616"/>
    </ligand>
</feature>
<feature type="binding site" evidence="1">
    <location>
        <position position="85"/>
    </location>
    <ligand>
        <name>L-citrulline</name>
        <dbReference type="ChEBI" id="CHEBI:57743"/>
    </ligand>
</feature>
<feature type="binding site" evidence="1">
    <location>
        <position position="115"/>
    </location>
    <ligand>
        <name>ATP</name>
        <dbReference type="ChEBI" id="CHEBI:30616"/>
    </ligand>
</feature>
<feature type="binding site" evidence="1">
    <location>
        <position position="117"/>
    </location>
    <ligand>
        <name>L-aspartate</name>
        <dbReference type="ChEBI" id="CHEBI:29991"/>
    </ligand>
</feature>
<feature type="binding site" evidence="1">
    <location>
        <position position="121"/>
    </location>
    <ligand>
        <name>L-aspartate</name>
        <dbReference type="ChEBI" id="CHEBI:29991"/>
    </ligand>
</feature>
<feature type="binding site" evidence="1">
    <location>
        <position position="121"/>
    </location>
    <ligand>
        <name>L-citrulline</name>
        <dbReference type="ChEBI" id="CHEBI:57743"/>
    </ligand>
</feature>
<feature type="binding site" evidence="1">
    <location>
        <position position="122"/>
    </location>
    <ligand>
        <name>L-aspartate</name>
        <dbReference type="ChEBI" id="CHEBI:29991"/>
    </ligand>
</feature>
<feature type="binding site" evidence="1">
    <location>
        <position position="125"/>
    </location>
    <ligand>
        <name>L-citrulline</name>
        <dbReference type="ChEBI" id="CHEBI:57743"/>
    </ligand>
</feature>
<feature type="binding site" evidence="1">
    <location>
        <position position="173"/>
    </location>
    <ligand>
        <name>L-citrulline</name>
        <dbReference type="ChEBI" id="CHEBI:57743"/>
    </ligand>
</feature>
<feature type="binding site" evidence="1">
    <location>
        <position position="258"/>
    </location>
    <ligand>
        <name>L-citrulline</name>
        <dbReference type="ChEBI" id="CHEBI:57743"/>
    </ligand>
</feature>
<feature type="binding site" evidence="1">
    <location>
        <position position="270"/>
    </location>
    <ligand>
        <name>L-citrulline</name>
        <dbReference type="ChEBI" id="CHEBI:57743"/>
    </ligand>
</feature>
<organism>
    <name type="scientific">Staphylococcus aureus (strain bovine RF122 / ET3-1)</name>
    <dbReference type="NCBI Taxonomy" id="273036"/>
    <lineage>
        <taxon>Bacteria</taxon>
        <taxon>Bacillati</taxon>
        <taxon>Bacillota</taxon>
        <taxon>Bacilli</taxon>
        <taxon>Bacillales</taxon>
        <taxon>Staphylococcaceae</taxon>
        <taxon>Staphylococcus</taxon>
    </lineage>
</organism>